<keyword id="KW-0028">Amino-acid biosynthesis</keyword>
<keyword id="KW-0963">Cytoplasm</keyword>
<keyword id="KW-0378">Hydrolase</keyword>
<keyword id="KW-0460">Magnesium</keyword>
<keyword id="KW-0479">Metal-binding</keyword>
<keyword id="KW-0486">Methionine biosynthesis</keyword>
<keyword id="KW-0539">Nucleus</keyword>
<keyword id="KW-1185">Reference proteome</keyword>
<evidence type="ECO:0000255" key="1">
    <source>
        <dbReference type="HAMAP-Rule" id="MF_03117"/>
    </source>
</evidence>
<protein>
    <recommendedName>
        <fullName evidence="1">Enolase-phosphatase E1</fullName>
        <ecNumber evidence="1">3.1.3.77</ecNumber>
    </recommendedName>
    <alternativeName>
        <fullName evidence="1">2,3-diketo-5-methylthio-1-phosphopentane phosphatase</fullName>
    </alternativeName>
</protein>
<accession>B4KCL9</accession>
<dbReference type="EC" id="3.1.3.77" evidence="1"/>
<dbReference type="EMBL" id="CH933806">
    <property type="protein sequence ID" value="EDW15868.1"/>
    <property type="molecule type" value="Genomic_DNA"/>
</dbReference>
<dbReference type="SMR" id="B4KCL9"/>
<dbReference type="FunCoup" id="B4KCL9">
    <property type="interactions" value="2080"/>
</dbReference>
<dbReference type="EnsemblMetazoa" id="FBtr0160940">
    <property type="protein sequence ID" value="FBpp0159432"/>
    <property type="gene ID" value="FBgn0132980"/>
</dbReference>
<dbReference type="EnsemblMetazoa" id="XM_002000371.4">
    <property type="protein sequence ID" value="XP_002000407.1"/>
    <property type="gene ID" value="LOC6574355"/>
</dbReference>
<dbReference type="GeneID" id="6574355"/>
<dbReference type="KEGG" id="dmo:Dmoj_GI10215"/>
<dbReference type="CTD" id="40630"/>
<dbReference type="eggNOG" id="KOG2630">
    <property type="taxonomic scope" value="Eukaryota"/>
</dbReference>
<dbReference type="HOGENOM" id="CLU_023273_0_0_1"/>
<dbReference type="InParanoid" id="B4KCL9"/>
<dbReference type="OMA" id="LQGMVWE"/>
<dbReference type="OrthoDB" id="272500at2759"/>
<dbReference type="PhylomeDB" id="B4KCL9"/>
<dbReference type="UniPathway" id="UPA00904">
    <property type="reaction ID" value="UER00876"/>
</dbReference>
<dbReference type="UniPathway" id="UPA00904">
    <property type="reaction ID" value="UER00877"/>
</dbReference>
<dbReference type="Proteomes" id="UP000009192">
    <property type="component" value="Unassembled WGS sequence"/>
</dbReference>
<dbReference type="GO" id="GO:0005737">
    <property type="term" value="C:cytoplasm"/>
    <property type="evidence" value="ECO:0007669"/>
    <property type="project" value="UniProtKB-SubCell"/>
</dbReference>
<dbReference type="GO" id="GO:0005634">
    <property type="term" value="C:nucleus"/>
    <property type="evidence" value="ECO:0007669"/>
    <property type="project" value="UniProtKB-SubCell"/>
</dbReference>
<dbReference type="GO" id="GO:0043874">
    <property type="term" value="F:acireductone synthase activity"/>
    <property type="evidence" value="ECO:0007669"/>
    <property type="project" value="UniProtKB-EC"/>
</dbReference>
<dbReference type="GO" id="GO:0000287">
    <property type="term" value="F:magnesium ion binding"/>
    <property type="evidence" value="ECO:0007669"/>
    <property type="project" value="UniProtKB-UniRule"/>
</dbReference>
<dbReference type="GO" id="GO:0019509">
    <property type="term" value="P:L-methionine salvage from methylthioadenosine"/>
    <property type="evidence" value="ECO:0007669"/>
    <property type="project" value="UniProtKB-UniRule"/>
</dbReference>
<dbReference type="CDD" id="cd01629">
    <property type="entry name" value="HAD_EP"/>
    <property type="match status" value="1"/>
</dbReference>
<dbReference type="FunFam" id="3.40.50.1000:FF:000079">
    <property type="entry name" value="Enolase-phosphatase E1"/>
    <property type="match status" value="1"/>
</dbReference>
<dbReference type="Gene3D" id="1.10.720.60">
    <property type="match status" value="1"/>
</dbReference>
<dbReference type="Gene3D" id="3.40.50.1000">
    <property type="entry name" value="HAD superfamily/HAD-like"/>
    <property type="match status" value="1"/>
</dbReference>
<dbReference type="HAMAP" id="MF_01681">
    <property type="entry name" value="Salvage_MtnC"/>
    <property type="match status" value="1"/>
</dbReference>
<dbReference type="HAMAP" id="MF_03117">
    <property type="entry name" value="Salvage_MtnC_euk"/>
    <property type="match status" value="1"/>
</dbReference>
<dbReference type="InterPro" id="IPR023943">
    <property type="entry name" value="Enolase-ppase_E1"/>
</dbReference>
<dbReference type="InterPro" id="IPR027511">
    <property type="entry name" value="ENOPH1_eukaryotes"/>
</dbReference>
<dbReference type="InterPro" id="IPR036412">
    <property type="entry name" value="HAD-like_sf"/>
</dbReference>
<dbReference type="InterPro" id="IPR006439">
    <property type="entry name" value="HAD-SF_hydro_IA"/>
</dbReference>
<dbReference type="InterPro" id="IPR023214">
    <property type="entry name" value="HAD_sf"/>
</dbReference>
<dbReference type="NCBIfam" id="TIGR01691">
    <property type="entry name" value="enolase-ppase"/>
    <property type="match status" value="1"/>
</dbReference>
<dbReference type="NCBIfam" id="TIGR01549">
    <property type="entry name" value="HAD-SF-IA-v1"/>
    <property type="match status" value="1"/>
</dbReference>
<dbReference type="PANTHER" id="PTHR20371">
    <property type="entry name" value="ENOLASE-PHOSPHATASE E1"/>
    <property type="match status" value="1"/>
</dbReference>
<dbReference type="PANTHER" id="PTHR20371:SF1">
    <property type="entry name" value="ENOLASE-PHOSPHATASE E1"/>
    <property type="match status" value="1"/>
</dbReference>
<dbReference type="Pfam" id="PF00702">
    <property type="entry name" value="Hydrolase"/>
    <property type="match status" value="1"/>
</dbReference>
<dbReference type="PRINTS" id="PR00413">
    <property type="entry name" value="HADHALOGNASE"/>
</dbReference>
<dbReference type="SFLD" id="SFLDF00044">
    <property type="entry name" value="enolase-phosphatase"/>
    <property type="match status" value="1"/>
</dbReference>
<dbReference type="SFLD" id="SFLDS00003">
    <property type="entry name" value="Haloacid_Dehalogenase"/>
    <property type="match status" value="1"/>
</dbReference>
<dbReference type="SUPFAM" id="SSF56784">
    <property type="entry name" value="HAD-like"/>
    <property type="match status" value="1"/>
</dbReference>
<organism>
    <name type="scientific">Drosophila mojavensis</name>
    <name type="common">Fruit fly</name>
    <dbReference type="NCBI Taxonomy" id="7230"/>
    <lineage>
        <taxon>Eukaryota</taxon>
        <taxon>Metazoa</taxon>
        <taxon>Ecdysozoa</taxon>
        <taxon>Arthropoda</taxon>
        <taxon>Hexapoda</taxon>
        <taxon>Insecta</taxon>
        <taxon>Pterygota</taxon>
        <taxon>Neoptera</taxon>
        <taxon>Endopterygota</taxon>
        <taxon>Diptera</taxon>
        <taxon>Brachycera</taxon>
        <taxon>Muscomorpha</taxon>
        <taxon>Ephydroidea</taxon>
        <taxon>Drosophilidae</taxon>
        <taxon>Drosophila</taxon>
    </lineage>
</organism>
<reference key="1">
    <citation type="journal article" date="2007" name="Nature">
        <title>Evolution of genes and genomes on the Drosophila phylogeny.</title>
        <authorList>
            <consortium name="Drosophila 12 genomes consortium"/>
        </authorList>
    </citation>
    <scope>NUCLEOTIDE SEQUENCE [LARGE SCALE GENOMIC DNA]</scope>
    <source>
        <strain>Tucson 15081-1352.22</strain>
    </source>
</reference>
<sequence>MALTDLSAKVVLVDIEGTTTSITFVHDVLFPYAKANAGQYLSETWETDDTKQIVEELTQLPQYTEYASTLETRPEINAAHIADFSRYLIEKDLKVTPLKTLQGHIWAKGYASGELKGHVYEDVAVAFQAWSDAGLRIAVYSSGSVAAQKLIFQHSIAGDLLPLLSAHFDTNVGHKQQTESYTRIAESLGVEPQHVLFLTDVPEEASAARDAGMQTVLLARPGNAPLTAEHTSAFPVVANFVALQSLKQP</sequence>
<name>ENOPH_DROMO</name>
<proteinExistence type="inferred from homology"/>
<comment type="function">
    <text evidence="1">Bifunctional enzyme that catalyzes the enolization of 2,3-diketo-5-methylthiopentyl-1-phosphate (DK-MTP-1-P) into the intermediate 2-hydroxy-3-keto-5-methylthiopentenyl-1-phosphate (HK-MTPenyl-1-P), which is then dephosphorylated to form the acireductone 1,2-dihydroxy-3-keto-5-methylthiopentene (DHK-MTPene).</text>
</comment>
<comment type="catalytic activity">
    <reaction evidence="1">
        <text>5-methylsulfanyl-2,3-dioxopentyl phosphate + H2O = 1,2-dihydroxy-5-(methylsulfanyl)pent-1-en-3-one + phosphate</text>
        <dbReference type="Rhea" id="RHEA:21700"/>
        <dbReference type="ChEBI" id="CHEBI:15377"/>
        <dbReference type="ChEBI" id="CHEBI:43474"/>
        <dbReference type="ChEBI" id="CHEBI:49252"/>
        <dbReference type="ChEBI" id="CHEBI:58828"/>
        <dbReference type="EC" id="3.1.3.77"/>
    </reaction>
</comment>
<comment type="cofactor">
    <cofactor evidence="1">
        <name>Mg(2+)</name>
        <dbReference type="ChEBI" id="CHEBI:18420"/>
    </cofactor>
    <text evidence="1">Binds 1 Mg(2+) ion per subunit.</text>
</comment>
<comment type="pathway">
    <text evidence="1">Amino-acid biosynthesis; L-methionine biosynthesis via salvage pathway; L-methionine from S-methyl-5-thio-alpha-D-ribose 1-phosphate: step 3/6.</text>
</comment>
<comment type="pathway">
    <text evidence="1">Amino-acid biosynthesis; L-methionine biosynthesis via salvage pathway; L-methionine from S-methyl-5-thio-alpha-D-ribose 1-phosphate: step 4/6.</text>
</comment>
<comment type="subunit">
    <text evidence="1">Monomer.</text>
</comment>
<comment type="subcellular location">
    <subcellularLocation>
        <location evidence="1">Cytoplasm</location>
    </subcellularLocation>
    <subcellularLocation>
        <location evidence="1">Nucleus</location>
    </subcellularLocation>
</comment>
<comment type="similarity">
    <text evidence="1">Belongs to the HAD-like hydrolase superfamily. MasA/MtnC family.</text>
</comment>
<gene>
    <name type="ORF">GI10215</name>
</gene>
<feature type="chain" id="PRO_0000393980" description="Enolase-phosphatase E1">
    <location>
        <begin position="1"/>
        <end position="249"/>
    </location>
</feature>
<feature type="binding site" evidence="1">
    <location>
        <position position="14"/>
    </location>
    <ligand>
        <name>Mg(2+)</name>
        <dbReference type="ChEBI" id="CHEBI:18420"/>
    </ligand>
</feature>
<feature type="binding site" evidence="1">
    <location>
        <position position="16"/>
    </location>
    <ligand>
        <name>Mg(2+)</name>
        <dbReference type="ChEBI" id="CHEBI:18420"/>
    </ligand>
</feature>
<feature type="binding site" evidence="1">
    <location>
        <begin position="141"/>
        <end position="142"/>
    </location>
    <ligand>
        <name>substrate</name>
    </ligand>
</feature>
<feature type="binding site" evidence="1">
    <location>
        <position position="175"/>
    </location>
    <ligand>
        <name>substrate</name>
    </ligand>
</feature>
<feature type="binding site" evidence="1">
    <location>
        <position position="200"/>
    </location>
    <ligand>
        <name>Mg(2+)</name>
        <dbReference type="ChEBI" id="CHEBI:18420"/>
    </ligand>
</feature>